<gene>
    <name evidence="1" type="primary">hisC</name>
    <name type="ordered locus">MCCL_0475</name>
</gene>
<evidence type="ECO:0000255" key="1">
    <source>
        <dbReference type="HAMAP-Rule" id="MF_01023"/>
    </source>
</evidence>
<comment type="catalytic activity">
    <reaction evidence="1">
        <text>L-histidinol phosphate + 2-oxoglutarate = 3-(imidazol-4-yl)-2-oxopropyl phosphate + L-glutamate</text>
        <dbReference type="Rhea" id="RHEA:23744"/>
        <dbReference type="ChEBI" id="CHEBI:16810"/>
        <dbReference type="ChEBI" id="CHEBI:29985"/>
        <dbReference type="ChEBI" id="CHEBI:57766"/>
        <dbReference type="ChEBI" id="CHEBI:57980"/>
        <dbReference type="EC" id="2.6.1.9"/>
    </reaction>
</comment>
<comment type="cofactor">
    <cofactor evidence="1">
        <name>pyridoxal 5'-phosphate</name>
        <dbReference type="ChEBI" id="CHEBI:597326"/>
    </cofactor>
</comment>
<comment type="pathway">
    <text evidence="1">Amino-acid biosynthesis; L-histidine biosynthesis; L-histidine from 5-phospho-alpha-D-ribose 1-diphosphate: step 7/9.</text>
</comment>
<comment type="subunit">
    <text evidence="1">Homodimer.</text>
</comment>
<comment type="similarity">
    <text evidence="1">Belongs to the class-II pyridoxal-phosphate-dependent aminotransferase family. Histidinol-phosphate aminotransferase subfamily.</text>
</comment>
<organism>
    <name type="scientific">Macrococcus caseolyticus (strain JCSC5402)</name>
    <name type="common">Macrococcoides caseolyticum</name>
    <dbReference type="NCBI Taxonomy" id="458233"/>
    <lineage>
        <taxon>Bacteria</taxon>
        <taxon>Bacillati</taxon>
        <taxon>Bacillota</taxon>
        <taxon>Bacilli</taxon>
        <taxon>Bacillales</taxon>
        <taxon>Staphylococcaceae</taxon>
        <taxon>Macrococcoides</taxon>
    </lineage>
</organism>
<protein>
    <recommendedName>
        <fullName evidence="1">Histidinol-phosphate aminotransferase</fullName>
        <ecNumber evidence="1">2.6.1.9</ecNumber>
    </recommendedName>
    <alternativeName>
        <fullName evidence="1">Imidazole acetol-phosphate transaminase</fullName>
    </alternativeName>
</protein>
<proteinExistence type="inferred from homology"/>
<sequence length="350" mass="39399">MKPQLESLGVYKAGLSEEALKRKFNVEGEFSRLASNENPIGPSPQVYEAIRSQDALNYYPDPEAIQLKASLSEFYQVDSEQILVGAGLDEIIMMISRARLNPKGHILTSEGTFIQYTTHALIEDNEVVSIPLKEGKFDLESFKDKMNDETSIIWICNPNNPTGTYVTETELTGFLESVHEDVMVVLDEAYFEFVLREDYPDGVALLKRFPNLIVLRTFSKAYGLAGLRVGYAITSKAYIDVFNKVKLPFNVTALSLVGAIAALKDQQYLKDYVAHNDKERNKFFEADYKEHLIDSVTNFIFVKTNQPEALFEALIKGGVIARPMPNGVRISIGTRDDNEKVHKVINSFFS</sequence>
<dbReference type="EC" id="2.6.1.9" evidence="1"/>
<dbReference type="EMBL" id="AP009484">
    <property type="protein sequence ID" value="BAH17182.1"/>
    <property type="molecule type" value="Genomic_DNA"/>
</dbReference>
<dbReference type="RefSeq" id="WP_012656383.1">
    <property type="nucleotide sequence ID" value="NC_011999.1"/>
</dbReference>
<dbReference type="SMR" id="B9EAC1"/>
<dbReference type="STRING" id="458233.MCCL_0475"/>
<dbReference type="KEGG" id="mcl:MCCL_0475"/>
<dbReference type="eggNOG" id="COG0079">
    <property type="taxonomic scope" value="Bacteria"/>
</dbReference>
<dbReference type="HOGENOM" id="CLU_017584_3_3_9"/>
<dbReference type="OrthoDB" id="9813612at2"/>
<dbReference type="UniPathway" id="UPA00031">
    <property type="reaction ID" value="UER00012"/>
</dbReference>
<dbReference type="Proteomes" id="UP000001383">
    <property type="component" value="Chromosome"/>
</dbReference>
<dbReference type="GO" id="GO:0004400">
    <property type="term" value="F:histidinol-phosphate transaminase activity"/>
    <property type="evidence" value="ECO:0007669"/>
    <property type="project" value="UniProtKB-UniRule"/>
</dbReference>
<dbReference type="GO" id="GO:0030170">
    <property type="term" value="F:pyridoxal phosphate binding"/>
    <property type="evidence" value="ECO:0007669"/>
    <property type="project" value="InterPro"/>
</dbReference>
<dbReference type="GO" id="GO:0000105">
    <property type="term" value="P:L-histidine biosynthetic process"/>
    <property type="evidence" value="ECO:0007669"/>
    <property type="project" value="UniProtKB-UniRule"/>
</dbReference>
<dbReference type="CDD" id="cd00609">
    <property type="entry name" value="AAT_like"/>
    <property type="match status" value="1"/>
</dbReference>
<dbReference type="Gene3D" id="3.90.1150.10">
    <property type="entry name" value="Aspartate Aminotransferase, domain 1"/>
    <property type="match status" value="1"/>
</dbReference>
<dbReference type="Gene3D" id="3.40.640.10">
    <property type="entry name" value="Type I PLP-dependent aspartate aminotransferase-like (Major domain)"/>
    <property type="match status" value="1"/>
</dbReference>
<dbReference type="HAMAP" id="MF_01023">
    <property type="entry name" value="HisC_aminotrans_2"/>
    <property type="match status" value="1"/>
</dbReference>
<dbReference type="InterPro" id="IPR001917">
    <property type="entry name" value="Aminotrans_II_pyridoxalP_BS"/>
</dbReference>
<dbReference type="InterPro" id="IPR004839">
    <property type="entry name" value="Aminotransferase_I/II_large"/>
</dbReference>
<dbReference type="InterPro" id="IPR005861">
    <property type="entry name" value="HisP_aminotrans"/>
</dbReference>
<dbReference type="InterPro" id="IPR050106">
    <property type="entry name" value="HistidinolP_aminotransfase"/>
</dbReference>
<dbReference type="InterPro" id="IPR015424">
    <property type="entry name" value="PyrdxlP-dep_Trfase"/>
</dbReference>
<dbReference type="InterPro" id="IPR015421">
    <property type="entry name" value="PyrdxlP-dep_Trfase_major"/>
</dbReference>
<dbReference type="InterPro" id="IPR015422">
    <property type="entry name" value="PyrdxlP-dep_Trfase_small"/>
</dbReference>
<dbReference type="NCBIfam" id="TIGR01141">
    <property type="entry name" value="hisC"/>
    <property type="match status" value="1"/>
</dbReference>
<dbReference type="PANTHER" id="PTHR43643:SF3">
    <property type="entry name" value="HISTIDINOL-PHOSPHATE AMINOTRANSFERASE"/>
    <property type="match status" value="1"/>
</dbReference>
<dbReference type="PANTHER" id="PTHR43643">
    <property type="entry name" value="HISTIDINOL-PHOSPHATE AMINOTRANSFERASE 2"/>
    <property type="match status" value="1"/>
</dbReference>
<dbReference type="Pfam" id="PF00155">
    <property type="entry name" value="Aminotran_1_2"/>
    <property type="match status" value="1"/>
</dbReference>
<dbReference type="SUPFAM" id="SSF53383">
    <property type="entry name" value="PLP-dependent transferases"/>
    <property type="match status" value="1"/>
</dbReference>
<dbReference type="PROSITE" id="PS00599">
    <property type="entry name" value="AA_TRANSFER_CLASS_2"/>
    <property type="match status" value="1"/>
</dbReference>
<feature type="chain" id="PRO_1000149100" description="Histidinol-phosphate aminotransferase">
    <location>
        <begin position="1"/>
        <end position="350"/>
    </location>
</feature>
<feature type="modified residue" description="N6-(pyridoxal phosphate)lysine" evidence="1">
    <location>
        <position position="220"/>
    </location>
</feature>
<name>HIS8_MACCJ</name>
<reference key="1">
    <citation type="journal article" date="2009" name="J. Bacteriol.">
        <title>Complete genome sequence of Macrococcus caseolyticus strain JCSCS5402, reflecting the ancestral genome of the human-pathogenic staphylococci.</title>
        <authorList>
            <person name="Baba T."/>
            <person name="Kuwahara-Arai K."/>
            <person name="Uchiyama I."/>
            <person name="Takeuchi F."/>
            <person name="Ito T."/>
            <person name="Hiramatsu K."/>
        </authorList>
    </citation>
    <scope>NUCLEOTIDE SEQUENCE [LARGE SCALE GENOMIC DNA]</scope>
    <source>
        <strain>JCSC5402</strain>
    </source>
</reference>
<keyword id="KW-0028">Amino-acid biosynthesis</keyword>
<keyword id="KW-0032">Aminotransferase</keyword>
<keyword id="KW-0368">Histidine biosynthesis</keyword>
<keyword id="KW-0663">Pyridoxal phosphate</keyword>
<keyword id="KW-1185">Reference proteome</keyword>
<keyword id="KW-0808">Transferase</keyword>
<accession>B9EAC1</accession>